<keyword id="KW-0030">Aminoacyl-tRNA synthetase</keyword>
<keyword id="KW-0067">ATP-binding</keyword>
<keyword id="KW-0963">Cytoplasm</keyword>
<keyword id="KW-0436">Ligase</keyword>
<keyword id="KW-0547">Nucleotide-binding</keyword>
<keyword id="KW-0648">Protein biosynthesis</keyword>
<name>SYP_WOLWR</name>
<sequence>MRLSKYYLPTLKEKPAHAKIISHQYSLRAGLIKQIASGIYSWLPLGLLVLKNIEDIIRDEMDKSGAIEVLMPCVQPANLWRESGRYDDYGKEMLRIKDRHEEDMLFGPTHEEVATDLIRDVVKSYKDLPLCLYQIQWKFRDEVRPRYGVMRGREFLMKDAYSFDVDYEGALNSYNLMYKTYIKIFKRMGLTPIGVRADTGPIGGNLSHEFHILANTGESTLYYDNKFSELLESEDVESLKSIYAVADDMHDPETCPISQEQLNVSKGIEIGHIFYFGDKYSKPMKASVTSQDGKNVNIHMGSYGIGVSRLVGAIIEAFHDDKGIIWPESVAPFRIGLINLQTKVTEAADKIYKALKSDEVLYDDTEGSVGVKFSRMDLIGLPWQIIVGKKAIDEKIVEVKNRATGEVKEMQIEEAINHFSTK</sequence>
<dbReference type="EC" id="6.1.1.15" evidence="1"/>
<dbReference type="EMBL" id="CP001391">
    <property type="protein sequence ID" value="ACN95527.1"/>
    <property type="molecule type" value="Genomic_DNA"/>
</dbReference>
<dbReference type="RefSeq" id="WP_007549149.1">
    <property type="nucleotide sequence ID" value="NZ_MKIF01000040.1"/>
</dbReference>
<dbReference type="SMR" id="C0R3N5"/>
<dbReference type="STRING" id="66084.WRi_007800"/>
<dbReference type="KEGG" id="wri:WRi_007800"/>
<dbReference type="HOGENOM" id="CLU_016739_4_2_5"/>
<dbReference type="Proteomes" id="UP000001293">
    <property type="component" value="Chromosome"/>
</dbReference>
<dbReference type="GO" id="GO:0005829">
    <property type="term" value="C:cytosol"/>
    <property type="evidence" value="ECO:0007669"/>
    <property type="project" value="TreeGrafter"/>
</dbReference>
<dbReference type="GO" id="GO:0005524">
    <property type="term" value="F:ATP binding"/>
    <property type="evidence" value="ECO:0007669"/>
    <property type="project" value="UniProtKB-UniRule"/>
</dbReference>
<dbReference type="GO" id="GO:0004827">
    <property type="term" value="F:proline-tRNA ligase activity"/>
    <property type="evidence" value="ECO:0007669"/>
    <property type="project" value="UniProtKB-UniRule"/>
</dbReference>
<dbReference type="GO" id="GO:0006433">
    <property type="term" value="P:prolyl-tRNA aminoacylation"/>
    <property type="evidence" value="ECO:0007669"/>
    <property type="project" value="UniProtKB-UniRule"/>
</dbReference>
<dbReference type="CDD" id="cd00861">
    <property type="entry name" value="ProRS_anticodon_short"/>
    <property type="match status" value="1"/>
</dbReference>
<dbReference type="CDD" id="cd00779">
    <property type="entry name" value="ProRS_core_prok"/>
    <property type="match status" value="1"/>
</dbReference>
<dbReference type="FunFam" id="3.30.930.10:FF:000042">
    <property type="entry name" value="probable proline--tRNA ligase, mitochondrial"/>
    <property type="match status" value="1"/>
</dbReference>
<dbReference type="FunFam" id="3.40.50.800:FF:000032">
    <property type="entry name" value="Proline--tRNA ligase"/>
    <property type="match status" value="1"/>
</dbReference>
<dbReference type="Gene3D" id="3.40.50.800">
    <property type="entry name" value="Anticodon-binding domain"/>
    <property type="match status" value="1"/>
</dbReference>
<dbReference type="Gene3D" id="3.30.930.10">
    <property type="entry name" value="Bira Bifunctional Protein, Domain 2"/>
    <property type="match status" value="1"/>
</dbReference>
<dbReference type="HAMAP" id="MF_01570">
    <property type="entry name" value="Pro_tRNA_synth_type2"/>
    <property type="match status" value="1"/>
</dbReference>
<dbReference type="InterPro" id="IPR002314">
    <property type="entry name" value="aa-tRNA-synt_IIb"/>
</dbReference>
<dbReference type="InterPro" id="IPR006195">
    <property type="entry name" value="aa-tRNA-synth_II"/>
</dbReference>
<dbReference type="InterPro" id="IPR045864">
    <property type="entry name" value="aa-tRNA-synth_II/BPL/LPL"/>
</dbReference>
<dbReference type="InterPro" id="IPR004154">
    <property type="entry name" value="Anticodon-bd"/>
</dbReference>
<dbReference type="InterPro" id="IPR036621">
    <property type="entry name" value="Anticodon-bd_dom_sf"/>
</dbReference>
<dbReference type="InterPro" id="IPR002316">
    <property type="entry name" value="Pro-tRNA-ligase_IIa"/>
</dbReference>
<dbReference type="InterPro" id="IPR004500">
    <property type="entry name" value="Pro-tRNA-synth_IIa_bac-type"/>
</dbReference>
<dbReference type="InterPro" id="IPR050062">
    <property type="entry name" value="Pro-tRNA_synthetase"/>
</dbReference>
<dbReference type="InterPro" id="IPR023716">
    <property type="entry name" value="Prolyl-tRNA_ligase_IIa_type2"/>
</dbReference>
<dbReference type="InterPro" id="IPR044140">
    <property type="entry name" value="ProRS_anticodon_short"/>
</dbReference>
<dbReference type="InterPro" id="IPR033730">
    <property type="entry name" value="ProRS_core_prok"/>
</dbReference>
<dbReference type="NCBIfam" id="NF008979">
    <property type="entry name" value="PRK12325.1"/>
    <property type="match status" value="1"/>
</dbReference>
<dbReference type="NCBIfam" id="TIGR00409">
    <property type="entry name" value="proS_fam_II"/>
    <property type="match status" value="1"/>
</dbReference>
<dbReference type="PANTHER" id="PTHR42753">
    <property type="entry name" value="MITOCHONDRIAL RIBOSOME PROTEIN L39/PROLYL-TRNA LIGASE FAMILY MEMBER"/>
    <property type="match status" value="1"/>
</dbReference>
<dbReference type="PANTHER" id="PTHR42753:SF2">
    <property type="entry name" value="PROLINE--TRNA LIGASE"/>
    <property type="match status" value="1"/>
</dbReference>
<dbReference type="Pfam" id="PF03129">
    <property type="entry name" value="HGTP_anticodon"/>
    <property type="match status" value="1"/>
</dbReference>
<dbReference type="Pfam" id="PF00587">
    <property type="entry name" value="tRNA-synt_2b"/>
    <property type="match status" value="1"/>
</dbReference>
<dbReference type="PRINTS" id="PR01046">
    <property type="entry name" value="TRNASYNTHPRO"/>
</dbReference>
<dbReference type="SUPFAM" id="SSF52954">
    <property type="entry name" value="Class II aaRS ABD-related"/>
    <property type="match status" value="1"/>
</dbReference>
<dbReference type="SUPFAM" id="SSF55681">
    <property type="entry name" value="Class II aaRS and biotin synthetases"/>
    <property type="match status" value="1"/>
</dbReference>
<dbReference type="PROSITE" id="PS50862">
    <property type="entry name" value="AA_TRNA_LIGASE_II"/>
    <property type="match status" value="1"/>
</dbReference>
<comment type="function">
    <text evidence="1">Catalyzes the attachment of proline to tRNA(Pro) in a two-step reaction: proline is first activated by ATP to form Pro-AMP and then transferred to the acceptor end of tRNA(Pro).</text>
</comment>
<comment type="catalytic activity">
    <reaction evidence="1">
        <text>tRNA(Pro) + L-proline + ATP = L-prolyl-tRNA(Pro) + AMP + diphosphate</text>
        <dbReference type="Rhea" id="RHEA:14305"/>
        <dbReference type="Rhea" id="RHEA-COMP:9700"/>
        <dbReference type="Rhea" id="RHEA-COMP:9702"/>
        <dbReference type="ChEBI" id="CHEBI:30616"/>
        <dbReference type="ChEBI" id="CHEBI:33019"/>
        <dbReference type="ChEBI" id="CHEBI:60039"/>
        <dbReference type="ChEBI" id="CHEBI:78442"/>
        <dbReference type="ChEBI" id="CHEBI:78532"/>
        <dbReference type="ChEBI" id="CHEBI:456215"/>
        <dbReference type="EC" id="6.1.1.15"/>
    </reaction>
</comment>
<comment type="subunit">
    <text evidence="1">Homodimer.</text>
</comment>
<comment type="subcellular location">
    <subcellularLocation>
        <location evidence="1">Cytoplasm</location>
    </subcellularLocation>
</comment>
<comment type="similarity">
    <text evidence="1">Belongs to the class-II aminoacyl-tRNA synthetase family. ProS type 2 subfamily.</text>
</comment>
<accession>C0R3N5</accession>
<gene>
    <name evidence="1" type="primary">proS</name>
    <name type="ordered locus">WRi_007800</name>
</gene>
<reference key="1">
    <citation type="journal article" date="2009" name="Proc. Natl. Acad. Sci. U.S.A.">
        <title>The mosaic genome structure of the Wolbachia wRi strain infecting Drosophila simulans.</title>
        <authorList>
            <person name="Klasson L."/>
            <person name="Westberg J."/>
            <person name="Sapountzis P."/>
            <person name="Naeslund K."/>
            <person name="Lutnaes Y."/>
            <person name="Darby A.C."/>
            <person name="Veneti Z."/>
            <person name="Chen L."/>
            <person name="Braig H.R."/>
            <person name="Garrett R."/>
            <person name="Bourtzis K."/>
            <person name="Andersson S.G."/>
        </authorList>
    </citation>
    <scope>NUCLEOTIDE SEQUENCE [LARGE SCALE GENOMIC DNA]</scope>
    <source>
        <strain>wRi</strain>
    </source>
</reference>
<protein>
    <recommendedName>
        <fullName evidence="1">Proline--tRNA ligase</fullName>
        <ecNumber evidence="1">6.1.1.15</ecNumber>
    </recommendedName>
    <alternativeName>
        <fullName evidence="1">Prolyl-tRNA synthetase</fullName>
        <shortName evidence="1">ProRS</shortName>
    </alternativeName>
</protein>
<evidence type="ECO:0000255" key="1">
    <source>
        <dbReference type="HAMAP-Rule" id="MF_01570"/>
    </source>
</evidence>
<proteinExistence type="inferred from homology"/>
<feature type="chain" id="PRO_1000185529" description="Proline--tRNA ligase">
    <location>
        <begin position="1"/>
        <end position="422"/>
    </location>
</feature>
<organism>
    <name type="scientific">Wolbachia sp. subsp. Drosophila simulans (strain wRi)</name>
    <dbReference type="NCBI Taxonomy" id="66084"/>
    <lineage>
        <taxon>Bacteria</taxon>
        <taxon>Pseudomonadati</taxon>
        <taxon>Pseudomonadota</taxon>
        <taxon>Alphaproteobacteria</taxon>
        <taxon>Rickettsiales</taxon>
        <taxon>Anaplasmataceae</taxon>
        <taxon>Wolbachieae</taxon>
        <taxon>Wolbachia</taxon>
    </lineage>
</organism>